<sequence length="76" mass="8516">MENKLSFEEAISQLEHLVSKLEQGDVPLEEAISYFKEGMELSKLCDEKLKNVQEQMAVILGEDGELEPFTALGDEA</sequence>
<proteinExistence type="inferred from homology"/>
<evidence type="ECO:0000255" key="1">
    <source>
        <dbReference type="HAMAP-Rule" id="MF_00337"/>
    </source>
</evidence>
<accession>C3LJV3</accession>
<feature type="chain" id="PRO_1000200242" description="Exodeoxyribonuclease 7 small subunit">
    <location>
        <begin position="1"/>
        <end position="76"/>
    </location>
</feature>
<reference key="1">
    <citation type="submission" date="2008-10" db="EMBL/GenBank/DDBJ databases">
        <title>Genome sequence of Bacillus anthracis str. CDC 684.</title>
        <authorList>
            <person name="Dodson R.J."/>
            <person name="Munk A.C."/>
            <person name="Brettin T."/>
            <person name="Bruce D."/>
            <person name="Detter C."/>
            <person name="Tapia R."/>
            <person name="Han C."/>
            <person name="Sutton G."/>
            <person name="Sims D."/>
        </authorList>
    </citation>
    <scope>NUCLEOTIDE SEQUENCE [LARGE SCALE GENOMIC DNA]</scope>
    <source>
        <strain>CDC 684 / NRRL 3495</strain>
    </source>
</reference>
<gene>
    <name evidence="1" type="primary">xseB</name>
    <name type="ordered locus">BAMEG_4438</name>
</gene>
<comment type="function">
    <text evidence="1">Bidirectionally degrades single-stranded DNA into large acid-insoluble oligonucleotides, which are then degraded further into small acid-soluble oligonucleotides.</text>
</comment>
<comment type="catalytic activity">
    <reaction evidence="1">
        <text>Exonucleolytic cleavage in either 5'- to 3'- or 3'- to 5'-direction to yield nucleoside 5'-phosphates.</text>
        <dbReference type="EC" id="3.1.11.6"/>
    </reaction>
</comment>
<comment type="subunit">
    <text evidence="1">Heterooligomer composed of large and small subunits.</text>
</comment>
<comment type="subcellular location">
    <subcellularLocation>
        <location evidence="1">Cytoplasm</location>
    </subcellularLocation>
</comment>
<comment type="similarity">
    <text evidence="1">Belongs to the XseB family.</text>
</comment>
<keyword id="KW-0963">Cytoplasm</keyword>
<keyword id="KW-0269">Exonuclease</keyword>
<keyword id="KW-0378">Hydrolase</keyword>
<keyword id="KW-0540">Nuclease</keyword>
<dbReference type="EC" id="3.1.11.6" evidence="1"/>
<dbReference type="EMBL" id="CP001215">
    <property type="protein sequence ID" value="ACP13610.1"/>
    <property type="molecule type" value="Genomic_DNA"/>
</dbReference>
<dbReference type="RefSeq" id="WP_000428423.1">
    <property type="nucleotide sequence ID" value="NC_012581.1"/>
</dbReference>
<dbReference type="SMR" id="C3LJV3"/>
<dbReference type="GeneID" id="93006923"/>
<dbReference type="KEGG" id="bah:BAMEG_4438"/>
<dbReference type="HOGENOM" id="CLU_145918_3_1_9"/>
<dbReference type="GO" id="GO:0005829">
    <property type="term" value="C:cytosol"/>
    <property type="evidence" value="ECO:0007669"/>
    <property type="project" value="TreeGrafter"/>
</dbReference>
<dbReference type="GO" id="GO:0009318">
    <property type="term" value="C:exodeoxyribonuclease VII complex"/>
    <property type="evidence" value="ECO:0007669"/>
    <property type="project" value="InterPro"/>
</dbReference>
<dbReference type="GO" id="GO:0008855">
    <property type="term" value="F:exodeoxyribonuclease VII activity"/>
    <property type="evidence" value="ECO:0007669"/>
    <property type="project" value="UniProtKB-UniRule"/>
</dbReference>
<dbReference type="GO" id="GO:0006308">
    <property type="term" value="P:DNA catabolic process"/>
    <property type="evidence" value="ECO:0007669"/>
    <property type="project" value="UniProtKB-UniRule"/>
</dbReference>
<dbReference type="FunFam" id="1.10.287.1040:FF:000002">
    <property type="entry name" value="Exodeoxyribonuclease 7 small subunit"/>
    <property type="match status" value="1"/>
</dbReference>
<dbReference type="Gene3D" id="1.10.287.1040">
    <property type="entry name" value="Exonuclease VII, small subunit"/>
    <property type="match status" value="1"/>
</dbReference>
<dbReference type="HAMAP" id="MF_00337">
    <property type="entry name" value="Exonuc_7_S"/>
    <property type="match status" value="1"/>
</dbReference>
<dbReference type="InterPro" id="IPR003761">
    <property type="entry name" value="Exonuc_VII_S"/>
</dbReference>
<dbReference type="InterPro" id="IPR037004">
    <property type="entry name" value="Exonuc_VII_ssu_sf"/>
</dbReference>
<dbReference type="NCBIfam" id="NF010666">
    <property type="entry name" value="PRK14063.1"/>
    <property type="match status" value="1"/>
</dbReference>
<dbReference type="NCBIfam" id="TIGR01280">
    <property type="entry name" value="xseB"/>
    <property type="match status" value="1"/>
</dbReference>
<dbReference type="PANTHER" id="PTHR34137">
    <property type="entry name" value="EXODEOXYRIBONUCLEASE 7 SMALL SUBUNIT"/>
    <property type="match status" value="1"/>
</dbReference>
<dbReference type="PANTHER" id="PTHR34137:SF1">
    <property type="entry name" value="EXODEOXYRIBONUCLEASE 7 SMALL SUBUNIT"/>
    <property type="match status" value="1"/>
</dbReference>
<dbReference type="Pfam" id="PF02609">
    <property type="entry name" value="Exonuc_VII_S"/>
    <property type="match status" value="1"/>
</dbReference>
<dbReference type="PIRSF" id="PIRSF006488">
    <property type="entry name" value="Exonuc_VII_S"/>
    <property type="match status" value="1"/>
</dbReference>
<dbReference type="SUPFAM" id="SSF116842">
    <property type="entry name" value="XseB-like"/>
    <property type="match status" value="1"/>
</dbReference>
<name>EX7S_BACAC</name>
<protein>
    <recommendedName>
        <fullName evidence="1">Exodeoxyribonuclease 7 small subunit</fullName>
        <ecNumber evidence="1">3.1.11.6</ecNumber>
    </recommendedName>
    <alternativeName>
        <fullName evidence="1">Exodeoxyribonuclease VII small subunit</fullName>
        <shortName evidence="1">Exonuclease VII small subunit</shortName>
    </alternativeName>
</protein>
<organism>
    <name type="scientific">Bacillus anthracis (strain CDC 684 / NRRL 3495)</name>
    <dbReference type="NCBI Taxonomy" id="568206"/>
    <lineage>
        <taxon>Bacteria</taxon>
        <taxon>Bacillati</taxon>
        <taxon>Bacillota</taxon>
        <taxon>Bacilli</taxon>
        <taxon>Bacillales</taxon>
        <taxon>Bacillaceae</taxon>
        <taxon>Bacillus</taxon>
        <taxon>Bacillus cereus group</taxon>
    </lineage>
</organism>